<name>PUR5_BACC4</name>
<evidence type="ECO:0000255" key="1">
    <source>
        <dbReference type="HAMAP-Rule" id="MF_00741"/>
    </source>
</evidence>
<proteinExistence type="inferred from homology"/>
<organism>
    <name type="scientific">Bacillus cereus (strain B4264)</name>
    <dbReference type="NCBI Taxonomy" id="405532"/>
    <lineage>
        <taxon>Bacteria</taxon>
        <taxon>Bacillati</taxon>
        <taxon>Bacillota</taxon>
        <taxon>Bacilli</taxon>
        <taxon>Bacillales</taxon>
        <taxon>Bacillaceae</taxon>
        <taxon>Bacillus</taxon>
        <taxon>Bacillus cereus group</taxon>
    </lineage>
</organism>
<comment type="catalytic activity">
    <reaction evidence="1">
        <text>2-formamido-N(1)-(5-O-phospho-beta-D-ribosyl)acetamidine + ATP = 5-amino-1-(5-phospho-beta-D-ribosyl)imidazole + ADP + phosphate + H(+)</text>
        <dbReference type="Rhea" id="RHEA:23032"/>
        <dbReference type="ChEBI" id="CHEBI:15378"/>
        <dbReference type="ChEBI" id="CHEBI:30616"/>
        <dbReference type="ChEBI" id="CHEBI:43474"/>
        <dbReference type="ChEBI" id="CHEBI:137981"/>
        <dbReference type="ChEBI" id="CHEBI:147287"/>
        <dbReference type="ChEBI" id="CHEBI:456216"/>
        <dbReference type="EC" id="6.3.3.1"/>
    </reaction>
</comment>
<comment type="pathway">
    <text evidence="1">Purine metabolism; IMP biosynthesis via de novo pathway; 5-amino-1-(5-phospho-D-ribosyl)imidazole from N(2)-formyl-N(1)-(5-phospho-D-ribosyl)glycinamide: step 2/2.</text>
</comment>
<comment type="subcellular location">
    <subcellularLocation>
        <location evidence="1">Cytoplasm</location>
    </subcellularLocation>
</comment>
<comment type="similarity">
    <text evidence="1">Belongs to the AIR synthase family.</text>
</comment>
<keyword id="KW-0067">ATP-binding</keyword>
<keyword id="KW-0963">Cytoplasm</keyword>
<keyword id="KW-0436">Ligase</keyword>
<keyword id="KW-0547">Nucleotide-binding</keyword>
<keyword id="KW-0658">Purine biosynthesis</keyword>
<sequence length="346" mass="37288">MANAYKQAGVDIEAGYEAVSRMKKHVQTTMRKEVLGGLGGFGGMFDLSKFALEEPVLVSGTDGVGTKLMLAFMADKHDTIGIDAVAMCVNDIVVQGAEPLFFLDYIACGKAEPSKIENIVKGISEGCRQAGCALIGGETAEMPGMYSTEEYDLAGFTVGIVDKKKIVTGEKIEAGHVLIGLASSGIHSNGYSLVRKVLLEDGELSLERIYGRLELPLGEELLKPTKIYVKPILELLKKHEVYGMAHITGGGFIENIPRMLPEGIGAEIELGSWEIQPIFSLLQEVGKLEEKEMFNIFNMGIGMVVAVKEEDAKDVVRLLEEQGEMARIIGRTIQGAGVTFNGGTAL</sequence>
<accession>B7H4T8</accession>
<feature type="chain" id="PRO_1000192994" description="Phosphoribosylformylglycinamidine cyclo-ligase">
    <location>
        <begin position="1"/>
        <end position="346"/>
    </location>
</feature>
<reference key="1">
    <citation type="submission" date="2008-10" db="EMBL/GenBank/DDBJ databases">
        <title>Genome sequence of Bacillus cereus B4264.</title>
        <authorList>
            <person name="Dodson R.J."/>
            <person name="Durkin A.S."/>
            <person name="Rosovitz M.J."/>
            <person name="Rasko D.A."/>
            <person name="Hoffmaster A."/>
            <person name="Ravel J."/>
            <person name="Sutton G."/>
        </authorList>
    </citation>
    <scope>NUCLEOTIDE SEQUENCE [LARGE SCALE GENOMIC DNA]</scope>
    <source>
        <strain>B4264</strain>
    </source>
</reference>
<dbReference type="EC" id="6.3.3.1" evidence="1"/>
<dbReference type="EMBL" id="CP001176">
    <property type="protein sequence ID" value="ACK58990.1"/>
    <property type="molecule type" value="Genomic_DNA"/>
</dbReference>
<dbReference type="RefSeq" id="WP_001262439.1">
    <property type="nucleotide sequence ID" value="NZ_VEHB01000009.1"/>
</dbReference>
<dbReference type="SMR" id="B7H4T8"/>
<dbReference type="KEGG" id="bcb:BCB4264_A0342"/>
<dbReference type="HOGENOM" id="CLU_047116_0_0_9"/>
<dbReference type="UniPathway" id="UPA00074">
    <property type="reaction ID" value="UER00129"/>
</dbReference>
<dbReference type="Proteomes" id="UP000007096">
    <property type="component" value="Chromosome"/>
</dbReference>
<dbReference type="GO" id="GO:0005829">
    <property type="term" value="C:cytosol"/>
    <property type="evidence" value="ECO:0007669"/>
    <property type="project" value="TreeGrafter"/>
</dbReference>
<dbReference type="GO" id="GO:0005524">
    <property type="term" value="F:ATP binding"/>
    <property type="evidence" value="ECO:0007669"/>
    <property type="project" value="UniProtKB-KW"/>
</dbReference>
<dbReference type="GO" id="GO:0004637">
    <property type="term" value="F:phosphoribosylamine-glycine ligase activity"/>
    <property type="evidence" value="ECO:0007669"/>
    <property type="project" value="TreeGrafter"/>
</dbReference>
<dbReference type="GO" id="GO:0004641">
    <property type="term" value="F:phosphoribosylformylglycinamidine cyclo-ligase activity"/>
    <property type="evidence" value="ECO:0007669"/>
    <property type="project" value="UniProtKB-UniRule"/>
</dbReference>
<dbReference type="GO" id="GO:0006189">
    <property type="term" value="P:'de novo' IMP biosynthetic process"/>
    <property type="evidence" value="ECO:0007669"/>
    <property type="project" value="UniProtKB-UniRule"/>
</dbReference>
<dbReference type="GO" id="GO:0046084">
    <property type="term" value="P:adenine biosynthetic process"/>
    <property type="evidence" value="ECO:0007669"/>
    <property type="project" value="TreeGrafter"/>
</dbReference>
<dbReference type="CDD" id="cd02196">
    <property type="entry name" value="PurM"/>
    <property type="match status" value="1"/>
</dbReference>
<dbReference type="FunFam" id="3.30.1330.10:FF:000001">
    <property type="entry name" value="Phosphoribosylformylglycinamidine cyclo-ligase"/>
    <property type="match status" value="1"/>
</dbReference>
<dbReference type="FunFam" id="3.90.650.10:FF:000001">
    <property type="entry name" value="Phosphoribosylformylglycinamidine cyclo-ligase"/>
    <property type="match status" value="1"/>
</dbReference>
<dbReference type="Gene3D" id="3.90.650.10">
    <property type="entry name" value="PurM-like C-terminal domain"/>
    <property type="match status" value="1"/>
</dbReference>
<dbReference type="Gene3D" id="3.30.1330.10">
    <property type="entry name" value="PurM-like, N-terminal domain"/>
    <property type="match status" value="1"/>
</dbReference>
<dbReference type="HAMAP" id="MF_00741">
    <property type="entry name" value="AIRS"/>
    <property type="match status" value="1"/>
</dbReference>
<dbReference type="InterPro" id="IPR010918">
    <property type="entry name" value="PurM-like_C_dom"/>
</dbReference>
<dbReference type="InterPro" id="IPR036676">
    <property type="entry name" value="PurM-like_C_sf"/>
</dbReference>
<dbReference type="InterPro" id="IPR016188">
    <property type="entry name" value="PurM-like_N"/>
</dbReference>
<dbReference type="InterPro" id="IPR036921">
    <property type="entry name" value="PurM-like_N_sf"/>
</dbReference>
<dbReference type="InterPro" id="IPR004733">
    <property type="entry name" value="PurM_cligase"/>
</dbReference>
<dbReference type="NCBIfam" id="TIGR00878">
    <property type="entry name" value="purM"/>
    <property type="match status" value="1"/>
</dbReference>
<dbReference type="PANTHER" id="PTHR10520:SF12">
    <property type="entry name" value="TRIFUNCTIONAL PURINE BIOSYNTHETIC PROTEIN ADENOSINE-3"/>
    <property type="match status" value="1"/>
</dbReference>
<dbReference type="PANTHER" id="PTHR10520">
    <property type="entry name" value="TRIFUNCTIONAL PURINE BIOSYNTHETIC PROTEIN ADENOSINE-3-RELATED"/>
    <property type="match status" value="1"/>
</dbReference>
<dbReference type="Pfam" id="PF00586">
    <property type="entry name" value="AIRS"/>
    <property type="match status" value="1"/>
</dbReference>
<dbReference type="Pfam" id="PF02769">
    <property type="entry name" value="AIRS_C"/>
    <property type="match status" value="1"/>
</dbReference>
<dbReference type="SUPFAM" id="SSF56042">
    <property type="entry name" value="PurM C-terminal domain-like"/>
    <property type="match status" value="1"/>
</dbReference>
<dbReference type="SUPFAM" id="SSF55326">
    <property type="entry name" value="PurM N-terminal domain-like"/>
    <property type="match status" value="1"/>
</dbReference>
<gene>
    <name evidence="1" type="primary">purM</name>
    <name type="ordered locus">BCB4264_A0342</name>
</gene>
<protein>
    <recommendedName>
        <fullName evidence="1">Phosphoribosylformylglycinamidine cyclo-ligase</fullName>
        <ecNumber evidence="1">6.3.3.1</ecNumber>
    </recommendedName>
    <alternativeName>
        <fullName evidence="1">AIR synthase</fullName>
    </alternativeName>
    <alternativeName>
        <fullName evidence="1">AIRS</fullName>
    </alternativeName>
    <alternativeName>
        <fullName evidence="1">Phosphoribosyl-aminoimidazole synthetase</fullName>
    </alternativeName>
</protein>